<name>PNP_GEOKA</name>
<gene>
    <name evidence="1" type="primary">pnp</name>
    <name type="ordered locus">GK1269</name>
</gene>
<feature type="chain" id="PRO_0000329659" description="Polyribonucleotide nucleotidyltransferase">
    <location>
        <begin position="1"/>
        <end position="723"/>
    </location>
</feature>
<feature type="domain" description="KH" evidence="1">
    <location>
        <begin position="554"/>
        <end position="613"/>
    </location>
</feature>
<feature type="domain" description="S1 motif" evidence="1">
    <location>
        <begin position="623"/>
        <end position="691"/>
    </location>
</feature>
<feature type="region of interest" description="Disordered" evidence="2">
    <location>
        <begin position="702"/>
        <end position="723"/>
    </location>
</feature>
<feature type="compositionally biased region" description="Basic residues" evidence="2">
    <location>
        <begin position="711"/>
        <end position="723"/>
    </location>
</feature>
<feature type="binding site" evidence="1">
    <location>
        <position position="487"/>
    </location>
    <ligand>
        <name>Mg(2+)</name>
        <dbReference type="ChEBI" id="CHEBI:18420"/>
    </ligand>
</feature>
<feature type="binding site" evidence="1">
    <location>
        <position position="493"/>
    </location>
    <ligand>
        <name>Mg(2+)</name>
        <dbReference type="ChEBI" id="CHEBI:18420"/>
    </ligand>
</feature>
<reference key="1">
    <citation type="journal article" date="2004" name="Nucleic Acids Res.">
        <title>Thermoadaptation trait revealed by the genome sequence of thermophilic Geobacillus kaustophilus.</title>
        <authorList>
            <person name="Takami H."/>
            <person name="Takaki Y."/>
            <person name="Chee G.-J."/>
            <person name="Nishi S."/>
            <person name="Shimamura S."/>
            <person name="Suzuki H."/>
            <person name="Matsui S."/>
            <person name="Uchiyama I."/>
        </authorList>
    </citation>
    <scope>NUCLEOTIDE SEQUENCE [LARGE SCALE GENOMIC DNA]</scope>
    <source>
        <strain>HTA426</strain>
    </source>
</reference>
<organism>
    <name type="scientific">Geobacillus kaustophilus (strain HTA426)</name>
    <dbReference type="NCBI Taxonomy" id="235909"/>
    <lineage>
        <taxon>Bacteria</taxon>
        <taxon>Bacillati</taxon>
        <taxon>Bacillota</taxon>
        <taxon>Bacilli</taxon>
        <taxon>Bacillales</taxon>
        <taxon>Anoxybacillaceae</taxon>
        <taxon>Geobacillus</taxon>
        <taxon>Geobacillus thermoleovorans group</taxon>
    </lineage>
</organism>
<sequence length="723" mass="79658">MEQEKRVFSIDVAGRPLIIETGELAKQANGAALVRYGDTVVLSTATASREAKNVDFFPLTVNYEERLYAVGKIPGGFIKREGRPSEKAILVSRLIDRPIRPLFAEGFRNEVQVVSMVMSVDQDCAPEVAALIGSSVALTISDIPFEGPIAGVIVGRVDGQFVINPTVEQMEKSDLHLVVAGTKDAINMVEAGADEVPEEVILEAIMFGHEEVKRLIAFQEEIAAQVGKEKMEVVLYEPDPALEAEIRQLAEADIKRAVQVPEKLARDAAIEDVKAGVIAKYEAEEADEEKLKQVQEILHKLVKEEVRRLITVEKIRPDGRKVDEIRPLSSAVGVLPRTHGSGLFTRGQTQVLSVCTLGALGDVQILDGLDLEESKRFMHHYNFPPFSVGETGPMRGPGRREIGHGALGERALEPVVPSEREFPYTIRLVSEVLESNGSTSQASICASTLAMMDAGVPIKAPVAGIAMGLVKNDDHYTILTDIQGIEDHLGDMDFKVAGTRKGVTALQMDIKIKGLTREILEEALMQARKGRLEILDHMMQTLSEPRKELSKYAPKILIMHINPDKIREVIGPSGKQINKIIDETGVKIDIEQDGTIFISSVDEAANQKAKQIIEDIVREVEVGQVYLGKVKRIEKFGAFVELFNGKDGLVHISELAEGRVGKVEDVVSIGDEILVKVTEIDKQGRVNLSRKAVLRDARNIGGELPRESREKRGRRPERHRMKP</sequence>
<keyword id="KW-0963">Cytoplasm</keyword>
<keyword id="KW-0460">Magnesium</keyword>
<keyword id="KW-0479">Metal-binding</keyword>
<keyword id="KW-0548">Nucleotidyltransferase</keyword>
<keyword id="KW-1185">Reference proteome</keyword>
<keyword id="KW-0694">RNA-binding</keyword>
<keyword id="KW-0808">Transferase</keyword>
<accession>Q5L0I2</accession>
<comment type="function">
    <text evidence="1">Involved in mRNA degradation. Catalyzes the phosphorolysis of single-stranded polyribonucleotides processively in the 3'- to 5'-direction.</text>
</comment>
<comment type="catalytic activity">
    <reaction evidence="1">
        <text>RNA(n+1) + phosphate = RNA(n) + a ribonucleoside 5'-diphosphate</text>
        <dbReference type="Rhea" id="RHEA:22096"/>
        <dbReference type="Rhea" id="RHEA-COMP:14527"/>
        <dbReference type="Rhea" id="RHEA-COMP:17342"/>
        <dbReference type="ChEBI" id="CHEBI:43474"/>
        <dbReference type="ChEBI" id="CHEBI:57930"/>
        <dbReference type="ChEBI" id="CHEBI:140395"/>
        <dbReference type="EC" id="2.7.7.8"/>
    </reaction>
</comment>
<comment type="cofactor">
    <cofactor evidence="1">
        <name>Mg(2+)</name>
        <dbReference type="ChEBI" id="CHEBI:18420"/>
    </cofactor>
</comment>
<comment type="subcellular location">
    <subcellularLocation>
        <location evidence="1">Cytoplasm</location>
    </subcellularLocation>
</comment>
<comment type="similarity">
    <text evidence="1">Belongs to the polyribonucleotide nucleotidyltransferase family.</text>
</comment>
<protein>
    <recommendedName>
        <fullName evidence="1">Polyribonucleotide nucleotidyltransferase</fullName>
        <ecNumber evidence="1">2.7.7.8</ecNumber>
    </recommendedName>
    <alternativeName>
        <fullName evidence="1">Polynucleotide phosphorylase</fullName>
        <shortName evidence="1">PNPase</shortName>
    </alternativeName>
</protein>
<proteinExistence type="inferred from homology"/>
<dbReference type="EC" id="2.7.7.8" evidence="1"/>
<dbReference type="EMBL" id="BA000043">
    <property type="protein sequence ID" value="BAD75554.1"/>
    <property type="molecule type" value="Genomic_DNA"/>
</dbReference>
<dbReference type="RefSeq" id="WP_011230769.1">
    <property type="nucleotide sequence ID" value="NC_006510.1"/>
</dbReference>
<dbReference type="SMR" id="Q5L0I2"/>
<dbReference type="STRING" id="235909.GK1269"/>
<dbReference type="KEGG" id="gka:GK1269"/>
<dbReference type="eggNOG" id="COG1185">
    <property type="taxonomic scope" value="Bacteria"/>
</dbReference>
<dbReference type="HOGENOM" id="CLU_004217_2_2_9"/>
<dbReference type="Proteomes" id="UP000001172">
    <property type="component" value="Chromosome"/>
</dbReference>
<dbReference type="GO" id="GO:0005829">
    <property type="term" value="C:cytosol"/>
    <property type="evidence" value="ECO:0007669"/>
    <property type="project" value="TreeGrafter"/>
</dbReference>
<dbReference type="GO" id="GO:0000175">
    <property type="term" value="F:3'-5'-RNA exonuclease activity"/>
    <property type="evidence" value="ECO:0007669"/>
    <property type="project" value="TreeGrafter"/>
</dbReference>
<dbReference type="GO" id="GO:0000287">
    <property type="term" value="F:magnesium ion binding"/>
    <property type="evidence" value="ECO:0007669"/>
    <property type="project" value="UniProtKB-UniRule"/>
</dbReference>
<dbReference type="GO" id="GO:0004654">
    <property type="term" value="F:polyribonucleotide nucleotidyltransferase activity"/>
    <property type="evidence" value="ECO:0007669"/>
    <property type="project" value="UniProtKB-UniRule"/>
</dbReference>
<dbReference type="GO" id="GO:0003723">
    <property type="term" value="F:RNA binding"/>
    <property type="evidence" value="ECO:0007669"/>
    <property type="project" value="UniProtKB-UniRule"/>
</dbReference>
<dbReference type="GO" id="GO:0006402">
    <property type="term" value="P:mRNA catabolic process"/>
    <property type="evidence" value="ECO:0007669"/>
    <property type="project" value="UniProtKB-UniRule"/>
</dbReference>
<dbReference type="GO" id="GO:0006396">
    <property type="term" value="P:RNA processing"/>
    <property type="evidence" value="ECO:0007669"/>
    <property type="project" value="InterPro"/>
</dbReference>
<dbReference type="CDD" id="cd02393">
    <property type="entry name" value="KH-I_PNPase"/>
    <property type="match status" value="1"/>
</dbReference>
<dbReference type="CDD" id="cd11363">
    <property type="entry name" value="RNase_PH_PNPase_1"/>
    <property type="match status" value="1"/>
</dbReference>
<dbReference type="CDD" id="cd11364">
    <property type="entry name" value="RNase_PH_PNPase_2"/>
    <property type="match status" value="1"/>
</dbReference>
<dbReference type="CDD" id="cd04472">
    <property type="entry name" value="S1_PNPase"/>
    <property type="match status" value="1"/>
</dbReference>
<dbReference type="FunFam" id="2.40.50.140:FF:000023">
    <property type="entry name" value="Polyribonucleotide nucleotidyltransferase"/>
    <property type="match status" value="1"/>
</dbReference>
<dbReference type="FunFam" id="3.30.1370.10:FF:000001">
    <property type="entry name" value="Polyribonucleotide nucleotidyltransferase"/>
    <property type="match status" value="1"/>
</dbReference>
<dbReference type="FunFam" id="3.30.230.70:FF:000001">
    <property type="entry name" value="Polyribonucleotide nucleotidyltransferase"/>
    <property type="match status" value="1"/>
</dbReference>
<dbReference type="FunFam" id="3.30.230.70:FF:000002">
    <property type="entry name" value="Polyribonucleotide nucleotidyltransferase"/>
    <property type="match status" value="1"/>
</dbReference>
<dbReference type="Gene3D" id="3.30.230.70">
    <property type="entry name" value="GHMP Kinase, N-terminal domain"/>
    <property type="match status" value="2"/>
</dbReference>
<dbReference type="Gene3D" id="3.30.1370.10">
    <property type="entry name" value="K Homology domain, type 1"/>
    <property type="match status" value="1"/>
</dbReference>
<dbReference type="Gene3D" id="2.40.50.140">
    <property type="entry name" value="Nucleic acid-binding proteins"/>
    <property type="match status" value="1"/>
</dbReference>
<dbReference type="HAMAP" id="MF_01595">
    <property type="entry name" value="PNPase"/>
    <property type="match status" value="1"/>
</dbReference>
<dbReference type="InterPro" id="IPR001247">
    <property type="entry name" value="ExoRNase_PH_dom1"/>
</dbReference>
<dbReference type="InterPro" id="IPR015847">
    <property type="entry name" value="ExoRNase_PH_dom2"/>
</dbReference>
<dbReference type="InterPro" id="IPR036345">
    <property type="entry name" value="ExoRNase_PH_dom2_sf"/>
</dbReference>
<dbReference type="InterPro" id="IPR004087">
    <property type="entry name" value="KH_dom"/>
</dbReference>
<dbReference type="InterPro" id="IPR004088">
    <property type="entry name" value="KH_dom_type_1"/>
</dbReference>
<dbReference type="InterPro" id="IPR036612">
    <property type="entry name" value="KH_dom_type_1_sf"/>
</dbReference>
<dbReference type="InterPro" id="IPR012340">
    <property type="entry name" value="NA-bd_OB-fold"/>
</dbReference>
<dbReference type="InterPro" id="IPR012162">
    <property type="entry name" value="PNPase"/>
</dbReference>
<dbReference type="InterPro" id="IPR027408">
    <property type="entry name" value="PNPase/RNase_PH_dom_sf"/>
</dbReference>
<dbReference type="InterPro" id="IPR015848">
    <property type="entry name" value="PNPase_PH_RNA-bd_bac/org-type"/>
</dbReference>
<dbReference type="InterPro" id="IPR020568">
    <property type="entry name" value="Ribosomal_Su5_D2-typ_SF"/>
</dbReference>
<dbReference type="InterPro" id="IPR003029">
    <property type="entry name" value="S1_domain"/>
</dbReference>
<dbReference type="NCBIfam" id="TIGR03591">
    <property type="entry name" value="polynuc_phos"/>
    <property type="match status" value="1"/>
</dbReference>
<dbReference type="NCBIfam" id="NF008805">
    <property type="entry name" value="PRK11824.1"/>
    <property type="match status" value="1"/>
</dbReference>
<dbReference type="PANTHER" id="PTHR11252">
    <property type="entry name" value="POLYRIBONUCLEOTIDE NUCLEOTIDYLTRANSFERASE"/>
    <property type="match status" value="1"/>
</dbReference>
<dbReference type="PANTHER" id="PTHR11252:SF0">
    <property type="entry name" value="POLYRIBONUCLEOTIDE NUCLEOTIDYLTRANSFERASE 1, MITOCHONDRIAL"/>
    <property type="match status" value="1"/>
</dbReference>
<dbReference type="Pfam" id="PF00013">
    <property type="entry name" value="KH_1"/>
    <property type="match status" value="1"/>
</dbReference>
<dbReference type="Pfam" id="PF03726">
    <property type="entry name" value="PNPase"/>
    <property type="match status" value="1"/>
</dbReference>
<dbReference type="Pfam" id="PF01138">
    <property type="entry name" value="RNase_PH"/>
    <property type="match status" value="2"/>
</dbReference>
<dbReference type="Pfam" id="PF03725">
    <property type="entry name" value="RNase_PH_C"/>
    <property type="match status" value="2"/>
</dbReference>
<dbReference type="Pfam" id="PF00575">
    <property type="entry name" value="S1"/>
    <property type="match status" value="1"/>
</dbReference>
<dbReference type="PIRSF" id="PIRSF005499">
    <property type="entry name" value="PNPase"/>
    <property type="match status" value="1"/>
</dbReference>
<dbReference type="SMART" id="SM00322">
    <property type="entry name" value="KH"/>
    <property type="match status" value="1"/>
</dbReference>
<dbReference type="SMART" id="SM00316">
    <property type="entry name" value="S1"/>
    <property type="match status" value="1"/>
</dbReference>
<dbReference type="SUPFAM" id="SSF54791">
    <property type="entry name" value="Eukaryotic type KH-domain (KH-domain type I)"/>
    <property type="match status" value="1"/>
</dbReference>
<dbReference type="SUPFAM" id="SSF50249">
    <property type="entry name" value="Nucleic acid-binding proteins"/>
    <property type="match status" value="1"/>
</dbReference>
<dbReference type="SUPFAM" id="SSF55666">
    <property type="entry name" value="Ribonuclease PH domain 2-like"/>
    <property type="match status" value="2"/>
</dbReference>
<dbReference type="SUPFAM" id="SSF54211">
    <property type="entry name" value="Ribosomal protein S5 domain 2-like"/>
    <property type="match status" value="2"/>
</dbReference>
<dbReference type="PROSITE" id="PS50084">
    <property type="entry name" value="KH_TYPE_1"/>
    <property type="match status" value="1"/>
</dbReference>
<dbReference type="PROSITE" id="PS50126">
    <property type="entry name" value="S1"/>
    <property type="match status" value="1"/>
</dbReference>
<evidence type="ECO:0000255" key="1">
    <source>
        <dbReference type="HAMAP-Rule" id="MF_01595"/>
    </source>
</evidence>
<evidence type="ECO:0000256" key="2">
    <source>
        <dbReference type="SAM" id="MobiDB-lite"/>
    </source>
</evidence>